<comment type="function">
    <text evidence="1">Global transcription factor that controls the expression of over 100 target genes in response to anoxia. It facilitates the adaptation to anaerobic growth conditions by regulating the expression of gene products that are involved in anaerobic energy metabolism. When the terminal electron acceptor, O(2), is no longer available, it represses the synthesis of enzymes involved in aerobic respiration and increases the synthesis of enzymes required for anaerobic respiration (By similarity).</text>
</comment>
<comment type="cofactor">
    <cofactor>
        <name>[4Fe-4S] cluster</name>
        <dbReference type="ChEBI" id="CHEBI:49883"/>
    </cofactor>
    <text>Binds 1 [4Fe-4S] cluster per subunit.</text>
</comment>
<comment type="subunit">
    <text evidence="1">Homodimer.</text>
</comment>
<comment type="subcellular location">
    <subcellularLocation>
        <location evidence="4">Cytoplasm</location>
    </subcellularLocation>
</comment>
<organism>
    <name type="scientific">Klebsiella oxytoca</name>
    <dbReference type="NCBI Taxonomy" id="571"/>
    <lineage>
        <taxon>Bacteria</taxon>
        <taxon>Pseudomonadati</taxon>
        <taxon>Pseudomonadota</taxon>
        <taxon>Gammaproteobacteria</taxon>
        <taxon>Enterobacterales</taxon>
        <taxon>Enterobacteriaceae</taxon>
        <taxon>Klebsiella/Raoultella group</taxon>
        <taxon>Klebsiella</taxon>
    </lineage>
</organism>
<feature type="chain" id="PRO_0000100164" description="Fumarate nitrate reduction regulatory protein">
    <location>
        <begin position="1"/>
        <end position="250"/>
    </location>
</feature>
<feature type="domain" description="HTH crp-type" evidence="3">
    <location>
        <begin position="164"/>
        <end position="237"/>
    </location>
</feature>
<feature type="DNA-binding region" description="H-T-H motif" evidence="3">
    <location>
        <begin position="197"/>
        <end position="216"/>
    </location>
</feature>
<feature type="region of interest" description="Essential for the oxygen-regulated activity" evidence="1">
    <location>
        <begin position="20"/>
        <end position="29"/>
    </location>
</feature>
<feature type="region of interest" description="Activating region 2A" evidence="2">
    <location>
        <begin position="47"/>
        <end position="50"/>
    </location>
</feature>
<feature type="region of interest" description="Activating region 3A" evidence="2">
    <location>
        <begin position="60"/>
        <end position="61"/>
    </location>
</feature>
<feature type="region of interest" description="Activating region 1A" evidence="2">
    <location>
        <begin position="71"/>
        <end position="75"/>
    </location>
</feature>
<feature type="region of interest" description="Activating region 3B" evidence="2">
    <location>
        <position position="81"/>
    </location>
</feature>
<feature type="region of interest" description="Activating region 3C" evidence="2">
    <location>
        <begin position="85"/>
        <end position="87"/>
    </location>
</feature>
<feature type="region of interest" description="Activating region 3D" evidence="2">
    <location>
        <position position="112"/>
    </location>
</feature>
<feature type="region of interest" description="Activating region 1B" evidence="2">
    <location>
        <begin position="116"/>
        <end position="121"/>
    </location>
</feature>
<feature type="region of interest" description="Activating region 2B" evidence="2">
    <location>
        <begin position="123"/>
        <end position="124"/>
    </location>
</feature>
<feature type="region of interest" description="Activating region 2C" evidence="2">
    <location>
        <begin position="127"/>
        <end position="128"/>
    </location>
</feature>
<feature type="region of interest" description="Dimerization" evidence="2">
    <location>
        <begin position="140"/>
        <end position="159"/>
    </location>
</feature>
<feature type="region of interest" description="Activating region 1C" evidence="2">
    <location>
        <begin position="181"/>
        <end position="191"/>
    </location>
</feature>
<feature type="binding site" evidence="2">
    <location>
        <position position="20"/>
    </location>
    <ligand>
        <name>[4Fe-4S] cluster</name>
        <dbReference type="ChEBI" id="CHEBI:49883"/>
    </ligand>
</feature>
<feature type="binding site" evidence="2">
    <location>
        <position position="23"/>
    </location>
    <ligand>
        <name>[4Fe-4S] cluster</name>
        <dbReference type="ChEBI" id="CHEBI:49883"/>
    </ligand>
</feature>
<feature type="binding site" evidence="2">
    <location>
        <position position="29"/>
    </location>
    <ligand>
        <name>[4Fe-4S] cluster</name>
        <dbReference type="ChEBI" id="CHEBI:49883"/>
    </ligand>
</feature>
<feature type="binding site" evidence="2">
    <location>
        <position position="122"/>
    </location>
    <ligand>
        <name>[4Fe-4S] cluster</name>
        <dbReference type="ChEBI" id="CHEBI:49883"/>
    </ligand>
</feature>
<name>FNR_KLEOX</name>
<gene>
    <name type="primary">fnr</name>
</gene>
<dbReference type="EMBL" id="AF220669">
    <property type="protein sequence ID" value="AAF73870.1"/>
    <property type="molecule type" value="Genomic_DNA"/>
</dbReference>
<dbReference type="RefSeq" id="WP_004102577.1">
    <property type="nucleotide sequence ID" value="NZ_WVTN01000005.1"/>
</dbReference>
<dbReference type="SMR" id="Q9AQ50"/>
<dbReference type="STRING" id="571.AB185_20050"/>
<dbReference type="GeneID" id="97395122"/>
<dbReference type="eggNOG" id="COG0664">
    <property type="taxonomic scope" value="Bacteria"/>
</dbReference>
<dbReference type="OrthoDB" id="7643467at2"/>
<dbReference type="GO" id="GO:0005829">
    <property type="term" value="C:cytosol"/>
    <property type="evidence" value="ECO:0007669"/>
    <property type="project" value="TreeGrafter"/>
</dbReference>
<dbReference type="GO" id="GO:0051539">
    <property type="term" value="F:4 iron, 4 sulfur cluster binding"/>
    <property type="evidence" value="ECO:0007669"/>
    <property type="project" value="UniProtKB-KW"/>
</dbReference>
<dbReference type="GO" id="GO:0003677">
    <property type="term" value="F:DNA binding"/>
    <property type="evidence" value="ECO:0007669"/>
    <property type="project" value="UniProtKB-KW"/>
</dbReference>
<dbReference type="GO" id="GO:0003700">
    <property type="term" value="F:DNA-binding transcription factor activity"/>
    <property type="evidence" value="ECO:0007669"/>
    <property type="project" value="InterPro"/>
</dbReference>
<dbReference type="GO" id="GO:0046872">
    <property type="term" value="F:metal ion binding"/>
    <property type="evidence" value="ECO:0007669"/>
    <property type="project" value="UniProtKB-KW"/>
</dbReference>
<dbReference type="CDD" id="cd00038">
    <property type="entry name" value="CAP_ED"/>
    <property type="match status" value="1"/>
</dbReference>
<dbReference type="CDD" id="cd00092">
    <property type="entry name" value="HTH_CRP"/>
    <property type="match status" value="1"/>
</dbReference>
<dbReference type="FunFam" id="1.10.10.10:FF:000028">
    <property type="entry name" value="Fumarate/nitrate reduction transcriptional regulator Fnr"/>
    <property type="match status" value="1"/>
</dbReference>
<dbReference type="FunFam" id="2.60.120.10:FF:000004">
    <property type="entry name" value="Fumarate/nitrate reduction transcriptional regulator Fnr"/>
    <property type="match status" value="1"/>
</dbReference>
<dbReference type="Gene3D" id="2.60.120.10">
    <property type="entry name" value="Jelly Rolls"/>
    <property type="match status" value="1"/>
</dbReference>
<dbReference type="Gene3D" id="1.10.10.10">
    <property type="entry name" value="Winged helix-like DNA-binding domain superfamily/Winged helix DNA-binding domain"/>
    <property type="match status" value="1"/>
</dbReference>
<dbReference type="InterPro" id="IPR000595">
    <property type="entry name" value="cNMP-bd_dom"/>
</dbReference>
<dbReference type="InterPro" id="IPR018490">
    <property type="entry name" value="cNMP-bd_dom_sf"/>
</dbReference>
<dbReference type="InterPro" id="IPR050397">
    <property type="entry name" value="Env_Response_Regulators"/>
</dbReference>
<dbReference type="InterPro" id="IPR012318">
    <property type="entry name" value="HTH_CRP"/>
</dbReference>
<dbReference type="InterPro" id="IPR014710">
    <property type="entry name" value="RmlC-like_jellyroll"/>
</dbReference>
<dbReference type="InterPro" id="IPR018335">
    <property type="entry name" value="Tscrpt_reg_HTH_Crp-type_CS"/>
</dbReference>
<dbReference type="InterPro" id="IPR036388">
    <property type="entry name" value="WH-like_DNA-bd_sf"/>
</dbReference>
<dbReference type="InterPro" id="IPR036390">
    <property type="entry name" value="WH_DNA-bd_sf"/>
</dbReference>
<dbReference type="NCBIfam" id="NF008365">
    <property type="entry name" value="PRK11161.1"/>
    <property type="match status" value="1"/>
</dbReference>
<dbReference type="PANTHER" id="PTHR24567">
    <property type="entry name" value="CRP FAMILY TRANSCRIPTIONAL REGULATORY PROTEIN"/>
    <property type="match status" value="1"/>
</dbReference>
<dbReference type="PANTHER" id="PTHR24567:SF75">
    <property type="entry name" value="FUMARATE AND NITRATE REDUCTION REGULATORY PROTEIN"/>
    <property type="match status" value="1"/>
</dbReference>
<dbReference type="Pfam" id="PF00027">
    <property type="entry name" value="cNMP_binding"/>
    <property type="match status" value="1"/>
</dbReference>
<dbReference type="Pfam" id="PF13545">
    <property type="entry name" value="HTH_Crp_2"/>
    <property type="match status" value="1"/>
</dbReference>
<dbReference type="PRINTS" id="PR00034">
    <property type="entry name" value="HTHCRP"/>
</dbReference>
<dbReference type="SMART" id="SM00100">
    <property type="entry name" value="cNMP"/>
    <property type="match status" value="1"/>
</dbReference>
<dbReference type="SMART" id="SM00419">
    <property type="entry name" value="HTH_CRP"/>
    <property type="match status" value="1"/>
</dbReference>
<dbReference type="SUPFAM" id="SSF51206">
    <property type="entry name" value="cAMP-binding domain-like"/>
    <property type="match status" value="1"/>
</dbReference>
<dbReference type="SUPFAM" id="SSF46785">
    <property type="entry name" value="Winged helix' DNA-binding domain"/>
    <property type="match status" value="1"/>
</dbReference>
<dbReference type="PROSITE" id="PS50042">
    <property type="entry name" value="CNMP_BINDING_3"/>
    <property type="match status" value="1"/>
</dbReference>
<dbReference type="PROSITE" id="PS00042">
    <property type="entry name" value="HTH_CRP_1"/>
    <property type="match status" value="1"/>
</dbReference>
<dbReference type="PROSITE" id="PS51063">
    <property type="entry name" value="HTH_CRP_2"/>
    <property type="match status" value="1"/>
</dbReference>
<sequence length="250" mass="27957">MIPEKRIIRRIQSGGCAIHCQDCSISQLCIPFTLNEHELDQLDNIIERKKPIQKGQTLFKAGDELKSLYAIRSGTIKSYTITEQGDEQITGFHLAGDLVGFDAIGTGHHPSFAQALETSMVCEIPFETLDDLSGKMPNLRQQMMRLMSGEIKGDQDMILLLSKKNAEERLAAFIYNLSRRFAQRGFSPREFRLTMTRGDIGNYLGLTVETISRLLGRFQKSGMLAVKGKYITIENSDLLAQLAGQARNVA</sequence>
<protein>
    <recommendedName>
        <fullName>Fumarate nitrate reduction regulatory protein</fullName>
    </recommendedName>
</protein>
<accession>Q9AQ50</accession>
<evidence type="ECO:0000250" key="1"/>
<evidence type="ECO:0000255" key="2"/>
<evidence type="ECO:0000255" key="3">
    <source>
        <dbReference type="PROSITE-ProRule" id="PRU00387"/>
    </source>
</evidence>
<evidence type="ECO:0000305" key="4"/>
<keyword id="KW-0004">4Fe-4S</keyword>
<keyword id="KW-0010">Activator</keyword>
<keyword id="KW-0963">Cytoplasm</keyword>
<keyword id="KW-0238">DNA-binding</keyword>
<keyword id="KW-0408">Iron</keyword>
<keyword id="KW-0411">Iron-sulfur</keyword>
<keyword id="KW-0479">Metal-binding</keyword>
<keyword id="KW-0678">Repressor</keyword>
<keyword id="KW-0804">Transcription</keyword>
<keyword id="KW-0805">Transcription regulation</keyword>
<proteinExistence type="inferred from homology"/>
<reference key="1">
    <citation type="journal article" date="2001" name="Antonie Van Leeuwenhoek">
        <title>Cloning, sequencing and characterization of Fnr from Klebsiella pneumoniae.</title>
        <authorList>
            <person name="Grabbe R."/>
            <person name="Kuhn A."/>
            <person name="Schmitz R.A."/>
        </authorList>
    </citation>
    <scope>NUCLEOTIDE SEQUENCE [GENOMIC DNA]</scope>
    <source>
        <strain>M5a1</strain>
    </source>
</reference>